<accession>Q5PJ64</accession>
<sequence>MKLRDSLAENNSIRLQAEANTWQEAVKIGVDLLVAADVVEPRYYQAILDGVEQFGPYFVIAPGLAMPHGRPEEGVKKTGFSLVTLKKPLEFNHEDNDPVDILITMAAVDANTNQEVGIMQIVNLFEDEANFDRLRACRTAQEVLDLIDRTNAAA</sequence>
<protein>
    <recommendedName>
        <fullName evidence="1">Ascorbate-specific PTS system EIIA component</fullName>
    </recommendedName>
    <alternativeName>
        <fullName evidence="1">Ascorbate-specific phosphotransferase enzyme IIA component</fullName>
    </alternativeName>
</protein>
<evidence type="ECO:0000250" key="1">
    <source>
        <dbReference type="UniProtKB" id="P69820"/>
    </source>
</evidence>
<evidence type="ECO:0000255" key="2">
    <source>
        <dbReference type="PROSITE-ProRule" id="PRU00417"/>
    </source>
</evidence>
<evidence type="ECO:0000305" key="3"/>
<reference key="1">
    <citation type="journal article" date="2004" name="Nat. Genet.">
        <title>Comparison of genome degradation in Paratyphi A and Typhi, human-restricted serovars of Salmonella enterica that cause typhoid.</title>
        <authorList>
            <person name="McClelland M."/>
            <person name="Sanderson K.E."/>
            <person name="Clifton S.W."/>
            <person name="Latreille P."/>
            <person name="Porwollik S."/>
            <person name="Sabo A."/>
            <person name="Meyer R."/>
            <person name="Bieri T."/>
            <person name="Ozersky P."/>
            <person name="McLellan M."/>
            <person name="Harkins C.R."/>
            <person name="Wang C."/>
            <person name="Nguyen C."/>
            <person name="Berghoff A."/>
            <person name="Elliott G."/>
            <person name="Kohlberg S."/>
            <person name="Strong C."/>
            <person name="Du F."/>
            <person name="Carter J."/>
            <person name="Kremizki C."/>
            <person name="Layman D."/>
            <person name="Leonard S."/>
            <person name="Sun H."/>
            <person name="Fulton L."/>
            <person name="Nash W."/>
            <person name="Miner T."/>
            <person name="Minx P."/>
            <person name="Delehaunty K."/>
            <person name="Fronick C."/>
            <person name="Magrini V."/>
            <person name="Nhan M."/>
            <person name="Warren W."/>
            <person name="Florea L."/>
            <person name="Spieth J."/>
            <person name="Wilson R.K."/>
        </authorList>
    </citation>
    <scope>NUCLEOTIDE SEQUENCE [LARGE SCALE GENOMIC DNA]</scope>
    <source>
        <strain>ATCC 9150 / SARB42</strain>
    </source>
</reference>
<name>ULAC_SALPA</name>
<keyword id="KW-0963">Cytoplasm</keyword>
<keyword id="KW-0418">Kinase</keyword>
<keyword id="KW-0597">Phosphoprotein</keyword>
<keyword id="KW-0598">Phosphotransferase system</keyword>
<keyword id="KW-0808">Transferase</keyword>
<keyword id="KW-0813">Transport</keyword>
<gene>
    <name type="primary">ulaC</name>
    <name type="ordered locus">SPA4202</name>
</gene>
<organism>
    <name type="scientific">Salmonella paratyphi A (strain ATCC 9150 / SARB42)</name>
    <dbReference type="NCBI Taxonomy" id="295319"/>
    <lineage>
        <taxon>Bacteria</taxon>
        <taxon>Pseudomonadati</taxon>
        <taxon>Pseudomonadota</taxon>
        <taxon>Gammaproteobacteria</taxon>
        <taxon>Enterobacterales</taxon>
        <taxon>Enterobacteriaceae</taxon>
        <taxon>Salmonella</taxon>
    </lineage>
</organism>
<feature type="chain" id="PRO_0000230315" description="Ascorbate-specific PTS system EIIA component">
    <location>
        <begin position="1"/>
        <end position="154"/>
    </location>
</feature>
<feature type="domain" description="PTS EIIA type-2" evidence="2">
    <location>
        <begin position="6"/>
        <end position="150"/>
    </location>
</feature>
<feature type="active site" description="Tele-phosphohistidine intermediate" evidence="2">
    <location>
        <position position="68"/>
    </location>
</feature>
<feature type="modified residue" description="Phosphohistidine" evidence="1">
    <location>
        <position position="68"/>
    </location>
</feature>
<dbReference type="EMBL" id="CP000026">
    <property type="protein sequence ID" value="AAV79939.1"/>
    <property type="molecule type" value="Genomic_DNA"/>
</dbReference>
<dbReference type="RefSeq" id="WP_000776534.1">
    <property type="nucleotide sequence ID" value="NC_006511.1"/>
</dbReference>
<dbReference type="SMR" id="Q5PJ64"/>
<dbReference type="KEGG" id="spt:SPA4202"/>
<dbReference type="HOGENOM" id="CLU_072531_2_0_6"/>
<dbReference type="Proteomes" id="UP000008185">
    <property type="component" value="Chromosome"/>
</dbReference>
<dbReference type="GO" id="GO:0005737">
    <property type="term" value="C:cytoplasm"/>
    <property type="evidence" value="ECO:0007669"/>
    <property type="project" value="UniProtKB-SubCell"/>
</dbReference>
<dbReference type="GO" id="GO:0016301">
    <property type="term" value="F:kinase activity"/>
    <property type="evidence" value="ECO:0007669"/>
    <property type="project" value="UniProtKB-KW"/>
</dbReference>
<dbReference type="GO" id="GO:0009401">
    <property type="term" value="P:phosphoenolpyruvate-dependent sugar phosphotransferase system"/>
    <property type="evidence" value="ECO:0007669"/>
    <property type="project" value="UniProtKB-KW"/>
</dbReference>
<dbReference type="CDD" id="cd00211">
    <property type="entry name" value="PTS_IIA_fru"/>
    <property type="match status" value="1"/>
</dbReference>
<dbReference type="FunFam" id="3.40.930.10:FF:000005">
    <property type="entry name" value="Ascorbate-specific phosphotransferase enzyme IIA component"/>
    <property type="match status" value="1"/>
</dbReference>
<dbReference type="Gene3D" id="3.40.930.10">
    <property type="entry name" value="Mannitol-specific EII, Chain A"/>
    <property type="match status" value="1"/>
</dbReference>
<dbReference type="InterPro" id="IPR051351">
    <property type="entry name" value="Ascorbate-PTS_EIIA_comp"/>
</dbReference>
<dbReference type="InterPro" id="IPR016152">
    <property type="entry name" value="PTrfase/Anion_transptr"/>
</dbReference>
<dbReference type="InterPro" id="IPR002178">
    <property type="entry name" value="PTS_EIIA_type-2_dom"/>
</dbReference>
<dbReference type="NCBIfam" id="NF007694">
    <property type="entry name" value="PRK10372.1"/>
    <property type="match status" value="1"/>
</dbReference>
<dbReference type="PANTHER" id="PTHR36203">
    <property type="entry name" value="ASCORBATE-SPECIFIC PTS SYSTEM EIIA COMPONENT"/>
    <property type="match status" value="1"/>
</dbReference>
<dbReference type="PANTHER" id="PTHR36203:SF1">
    <property type="entry name" value="ASCORBATE-SPECIFIC PTS SYSTEM EIIA COMPONENT"/>
    <property type="match status" value="1"/>
</dbReference>
<dbReference type="Pfam" id="PF00359">
    <property type="entry name" value="PTS_EIIA_2"/>
    <property type="match status" value="1"/>
</dbReference>
<dbReference type="SUPFAM" id="SSF55804">
    <property type="entry name" value="Phoshotransferase/anion transport protein"/>
    <property type="match status" value="1"/>
</dbReference>
<dbReference type="PROSITE" id="PS51094">
    <property type="entry name" value="PTS_EIIA_TYPE_2"/>
    <property type="match status" value="1"/>
</dbReference>
<dbReference type="PROSITE" id="PS00372">
    <property type="entry name" value="PTS_EIIA_TYPE_2_HIS"/>
    <property type="match status" value="1"/>
</dbReference>
<proteinExistence type="inferred from homology"/>
<comment type="function">
    <text evidence="1">The phosphoenolpyruvate-dependent sugar phosphotransferase system (sugar PTS), a major carbohydrate active transport system, catalyzes the phosphorylation of incoming sugar substrates concomitantly with their translocation across the cell membrane. The enzyme II UlaABC PTS system is involved in ascorbate transport.</text>
</comment>
<comment type="subcellular location">
    <subcellularLocation>
        <location evidence="3">Cytoplasm</location>
    </subcellularLocation>
</comment>
<comment type="induction">
    <text evidence="1">Induced by L-ascorbate. Repressed by UlaR.</text>
</comment>
<comment type="domain">
    <text evidence="2">The PTS EIIA type-2 domain is phosphorylated by phospho-HPr on a histidyl residue. Then, it transfers the phosphoryl group to the PTS EIIB type-2 domain.</text>
</comment>